<evidence type="ECO:0000255" key="1">
    <source>
        <dbReference type="HAMAP-Rule" id="MF_01021"/>
    </source>
</evidence>
<dbReference type="EC" id="3.5.4.19" evidence="1"/>
<dbReference type="EMBL" id="CP001068">
    <property type="protein sequence ID" value="ACD28344.1"/>
    <property type="molecule type" value="Genomic_DNA"/>
</dbReference>
<dbReference type="SMR" id="B2UEE4"/>
<dbReference type="STRING" id="402626.Rpic_3222"/>
<dbReference type="KEGG" id="rpi:Rpic_3222"/>
<dbReference type="eggNOG" id="COG0139">
    <property type="taxonomic scope" value="Bacteria"/>
</dbReference>
<dbReference type="HOGENOM" id="CLU_048577_5_0_4"/>
<dbReference type="UniPathway" id="UPA00031">
    <property type="reaction ID" value="UER00008"/>
</dbReference>
<dbReference type="GO" id="GO:0005737">
    <property type="term" value="C:cytoplasm"/>
    <property type="evidence" value="ECO:0007669"/>
    <property type="project" value="UniProtKB-SubCell"/>
</dbReference>
<dbReference type="GO" id="GO:0000287">
    <property type="term" value="F:magnesium ion binding"/>
    <property type="evidence" value="ECO:0007669"/>
    <property type="project" value="UniProtKB-UniRule"/>
</dbReference>
<dbReference type="GO" id="GO:0004635">
    <property type="term" value="F:phosphoribosyl-AMP cyclohydrolase activity"/>
    <property type="evidence" value="ECO:0007669"/>
    <property type="project" value="UniProtKB-UniRule"/>
</dbReference>
<dbReference type="GO" id="GO:0008270">
    <property type="term" value="F:zinc ion binding"/>
    <property type="evidence" value="ECO:0007669"/>
    <property type="project" value="UniProtKB-UniRule"/>
</dbReference>
<dbReference type="GO" id="GO:0000105">
    <property type="term" value="P:L-histidine biosynthetic process"/>
    <property type="evidence" value="ECO:0007669"/>
    <property type="project" value="UniProtKB-UniRule"/>
</dbReference>
<dbReference type="FunFam" id="3.10.20.810:FF:000001">
    <property type="entry name" value="Histidine biosynthesis bifunctional protein HisIE"/>
    <property type="match status" value="1"/>
</dbReference>
<dbReference type="Gene3D" id="3.10.20.810">
    <property type="entry name" value="Phosphoribosyl-AMP cyclohydrolase"/>
    <property type="match status" value="1"/>
</dbReference>
<dbReference type="HAMAP" id="MF_01021">
    <property type="entry name" value="HisI"/>
    <property type="match status" value="1"/>
</dbReference>
<dbReference type="InterPro" id="IPR026660">
    <property type="entry name" value="PRA-CH"/>
</dbReference>
<dbReference type="InterPro" id="IPR002496">
    <property type="entry name" value="PRib_AMP_CycHydrolase_dom"/>
</dbReference>
<dbReference type="InterPro" id="IPR038019">
    <property type="entry name" value="PRib_AMP_CycHydrolase_sf"/>
</dbReference>
<dbReference type="NCBIfam" id="NF000768">
    <property type="entry name" value="PRK00051.1"/>
    <property type="match status" value="1"/>
</dbReference>
<dbReference type="PANTHER" id="PTHR42945">
    <property type="entry name" value="HISTIDINE BIOSYNTHESIS BIFUNCTIONAL PROTEIN"/>
    <property type="match status" value="1"/>
</dbReference>
<dbReference type="PANTHER" id="PTHR42945:SF1">
    <property type="entry name" value="HISTIDINE BIOSYNTHESIS BIFUNCTIONAL PROTEIN HIS7"/>
    <property type="match status" value="1"/>
</dbReference>
<dbReference type="Pfam" id="PF01502">
    <property type="entry name" value="PRA-CH"/>
    <property type="match status" value="1"/>
</dbReference>
<dbReference type="SUPFAM" id="SSF141734">
    <property type="entry name" value="HisI-like"/>
    <property type="match status" value="1"/>
</dbReference>
<name>HIS3_RALPJ</name>
<protein>
    <recommendedName>
        <fullName evidence="1">Phosphoribosyl-AMP cyclohydrolase</fullName>
        <shortName evidence="1">PRA-CH</shortName>
        <ecNumber evidence="1">3.5.4.19</ecNumber>
    </recommendedName>
</protein>
<comment type="function">
    <text evidence="1">Catalyzes the hydrolysis of the adenine ring of phosphoribosyl-AMP.</text>
</comment>
<comment type="catalytic activity">
    <reaction evidence="1">
        <text>1-(5-phospho-beta-D-ribosyl)-5'-AMP + H2O = 1-(5-phospho-beta-D-ribosyl)-5-[(5-phospho-beta-D-ribosylamino)methylideneamino]imidazole-4-carboxamide</text>
        <dbReference type="Rhea" id="RHEA:20049"/>
        <dbReference type="ChEBI" id="CHEBI:15377"/>
        <dbReference type="ChEBI" id="CHEBI:58435"/>
        <dbReference type="ChEBI" id="CHEBI:59457"/>
        <dbReference type="EC" id="3.5.4.19"/>
    </reaction>
</comment>
<comment type="cofactor">
    <cofactor evidence="1">
        <name>Mg(2+)</name>
        <dbReference type="ChEBI" id="CHEBI:18420"/>
    </cofactor>
    <text evidence="1">Binds 1 Mg(2+) ion per subunit.</text>
</comment>
<comment type="cofactor">
    <cofactor evidence="1">
        <name>Zn(2+)</name>
        <dbReference type="ChEBI" id="CHEBI:29105"/>
    </cofactor>
    <text evidence="1">Binds 1 zinc ion per subunit.</text>
</comment>
<comment type="pathway">
    <text evidence="1">Amino-acid biosynthesis; L-histidine biosynthesis; L-histidine from 5-phospho-alpha-D-ribose 1-diphosphate: step 3/9.</text>
</comment>
<comment type="subunit">
    <text evidence="1">Homodimer.</text>
</comment>
<comment type="subcellular location">
    <subcellularLocation>
        <location evidence="1">Cytoplasm</location>
    </subcellularLocation>
</comment>
<comment type="similarity">
    <text evidence="1">Belongs to the PRA-CH family.</text>
</comment>
<organism>
    <name type="scientific">Ralstonia pickettii (strain 12J)</name>
    <dbReference type="NCBI Taxonomy" id="402626"/>
    <lineage>
        <taxon>Bacteria</taxon>
        <taxon>Pseudomonadati</taxon>
        <taxon>Pseudomonadota</taxon>
        <taxon>Betaproteobacteria</taxon>
        <taxon>Burkholderiales</taxon>
        <taxon>Burkholderiaceae</taxon>
        <taxon>Ralstonia</taxon>
    </lineage>
</organism>
<feature type="chain" id="PRO_1000135362" description="Phosphoribosyl-AMP cyclohydrolase">
    <location>
        <begin position="1"/>
        <end position="140"/>
    </location>
</feature>
<feature type="binding site" evidence="1">
    <location>
        <position position="78"/>
    </location>
    <ligand>
        <name>Mg(2+)</name>
        <dbReference type="ChEBI" id="CHEBI:18420"/>
    </ligand>
</feature>
<feature type="binding site" evidence="1">
    <location>
        <position position="79"/>
    </location>
    <ligand>
        <name>Zn(2+)</name>
        <dbReference type="ChEBI" id="CHEBI:29105"/>
        <note>ligand shared between dimeric partners</note>
    </ligand>
</feature>
<feature type="binding site" evidence="1">
    <location>
        <position position="80"/>
    </location>
    <ligand>
        <name>Mg(2+)</name>
        <dbReference type="ChEBI" id="CHEBI:18420"/>
    </ligand>
</feature>
<feature type="binding site" evidence="1">
    <location>
        <position position="82"/>
    </location>
    <ligand>
        <name>Mg(2+)</name>
        <dbReference type="ChEBI" id="CHEBI:18420"/>
    </ligand>
</feature>
<feature type="binding site" evidence="1">
    <location>
        <position position="96"/>
    </location>
    <ligand>
        <name>Zn(2+)</name>
        <dbReference type="ChEBI" id="CHEBI:29105"/>
        <note>ligand shared between dimeric partners</note>
    </ligand>
</feature>
<feature type="binding site" evidence="1">
    <location>
        <position position="103"/>
    </location>
    <ligand>
        <name>Zn(2+)</name>
        <dbReference type="ChEBI" id="CHEBI:29105"/>
        <note>ligand shared between dimeric partners</note>
    </ligand>
</feature>
<proteinExistence type="inferred from homology"/>
<gene>
    <name evidence="1" type="primary">hisI</name>
    <name type="ordered locus">Rpic_3222</name>
</gene>
<sequence length="140" mass="16101">MSKKWLNKVHWDDNGLVPVIVQEQGSNDVLMFAFMNREALQKTVESGEAVFWSRSRKRLWHKGEESGHIQKVHEIRLDCDEDVILLRVTQIGGIACHTGRHACFFQKFEGNVEDGDWHTVEPVLKNPDDIYAGKPGHNHE</sequence>
<accession>B2UEE4</accession>
<reference key="1">
    <citation type="submission" date="2008-05" db="EMBL/GenBank/DDBJ databases">
        <title>Complete sequence of chromosome 1 of Ralstonia pickettii 12J.</title>
        <authorList>
            <person name="Lucas S."/>
            <person name="Copeland A."/>
            <person name="Lapidus A."/>
            <person name="Glavina del Rio T."/>
            <person name="Dalin E."/>
            <person name="Tice H."/>
            <person name="Bruce D."/>
            <person name="Goodwin L."/>
            <person name="Pitluck S."/>
            <person name="Meincke L."/>
            <person name="Brettin T."/>
            <person name="Detter J.C."/>
            <person name="Han C."/>
            <person name="Kuske C.R."/>
            <person name="Schmutz J."/>
            <person name="Larimer F."/>
            <person name="Land M."/>
            <person name="Hauser L."/>
            <person name="Kyrpides N."/>
            <person name="Mikhailova N."/>
            <person name="Marsh T."/>
            <person name="Richardson P."/>
        </authorList>
    </citation>
    <scope>NUCLEOTIDE SEQUENCE [LARGE SCALE GENOMIC DNA]</scope>
    <source>
        <strain>12J</strain>
    </source>
</reference>
<keyword id="KW-0028">Amino-acid biosynthesis</keyword>
<keyword id="KW-0963">Cytoplasm</keyword>
<keyword id="KW-0368">Histidine biosynthesis</keyword>
<keyword id="KW-0378">Hydrolase</keyword>
<keyword id="KW-0460">Magnesium</keyword>
<keyword id="KW-0479">Metal-binding</keyword>
<keyword id="KW-0862">Zinc</keyword>